<reference key="1">
    <citation type="journal article" date="2006" name="Proc. Natl. Acad. Sci. U.S.A.">
        <title>Comparative genomics of the lactic acid bacteria.</title>
        <authorList>
            <person name="Makarova K.S."/>
            <person name="Slesarev A."/>
            <person name="Wolf Y.I."/>
            <person name="Sorokin A."/>
            <person name="Mirkin B."/>
            <person name="Koonin E.V."/>
            <person name="Pavlov A."/>
            <person name="Pavlova N."/>
            <person name="Karamychev V."/>
            <person name="Polouchine N."/>
            <person name="Shakhova V."/>
            <person name="Grigoriev I."/>
            <person name="Lou Y."/>
            <person name="Rohksar D."/>
            <person name="Lucas S."/>
            <person name="Huang K."/>
            <person name="Goodstein D.M."/>
            <person name="Hawkins T."/>
            <person name="Plengvidhya V."/>
            <person name="Welker D."/>
            <person name="Hughes J."/>
            <person name="Goh Y."/>
            <person name="Benson A."/>
            <person name="Baldwin K."/>
            <person name="Lee J.-H."/>
            <person name="Diaz-Muniz I."/>
            <person name="Dosti B."/>
            <person name="Smeianov V."/>
            <person name="Wechter W."/>
            <person name="Barabote R."/>
            <person name="Lorca G."/>
            <person name="Altermann E."/>
            <person name="Barrangou R."/>
            <person name="Ganesan B."/>
            <person name="Xie Y."/>
            <person name="Rawsthorne H."/>
            <person name="Tamir D."/>
            <person name="Parker C."/>
            <person name="Breidt F."/>
            <person name="Broadbent J.R."/>
            <person name="Hutkins R."/>
            <person name="O'Sullivan D."/>
            <person name="Steele J."/>
            <person name="Unlu G."/>
            <person name="Saier M.H. Jr."/>
            <person name="Klaenhammer T."/>
            <person name="Richardson P."/>
            <person name="Kozyavkin S."/>
            <person name="Weimer B.C."/>
            <person name="Mills D.A."/>
        </authorList>
    </citation>
    <scope>NUCLEOTIDE SEQUENCE [LARGE SCALE GENOMIC DNA]</scope>
    <source>
        <strain>ATCC 367 / BCRC 12310 / CIP 105137 / JCM 1170 / LMG 11437 / NCIMB 947 / NCTC 947</strain>
    </source>
</reference>
<protein>
    <recommendedName>
        <fullName evidence="1">33 kDa chaperonin</fullName>
    </recommendedName>
    <alternativeName>
        <fullName evidence="1">Heat shock protein 33 homolog</fullName>
        <shortName evidence="1">HSP33</shortName>
    </alternativeName>
</protein>
<feature type="chain" id="PRO_1000015545" description="33 kDa chaperonin">
    <location>
        <begin position="1"/>
        <end position="295"/>
    </location>
</feature>
<feature type="disulfide bond" description="Redox-active" evidence="1">
    <location>
        <begin position="238"/>
        <end position="240"/>
    </location>
</feature>
<feature type="disulfide bond" description="Redox-active" evidence="1">
    <location>
        <begin position="271"/>
        <end position="274"/>
    </location>
</feature>
<accession>Q03SZ0</accession>
<name>HSLO_LEVBA</name>
<sequence length="295" mass="31815">MADYLVKSLIDGGMFRAYVVDATETVAEAQQRHDTWSAATAALGRTLIGTMLLSTSLLKGDEKLTVKVNGHGPVGAIVVDGNANGTVKGYLQYPHTSLPLNEKHKIDVKKAVGVNGMLTVTKDQGLGQPYTGQVPLVSGELGEDFTYYLAKSEQIPSAVGVSVFVQPNNTVKVAGGFLIQVMPGASDEAIARLEQRIKEMPMVSELLLAGQTPEEILALLFKEEKIKIVQKMPVGFKCDCSKDRFAQSLASIQPAALQEMIDEDHGAEAVCHFCGTKYQFSEDDLRAILTEAQAK</sequence>
<dbReference type="EMBL" id="CP000416">
    <property type="protein sequence ID" value="ABJ63682.1"/>
    <property type="molecule type" value="Genomic_DNA"/>
</dbReference>
<dbReference type="RefSeq" id="WP_011667308.1">
    <property type="nucleotide sequence ID" value="NC_008497.1"/>
</dbReference>
<dbReference type="SMR" id="Q03SZ0"/>
<dbReference type="STRING" id="387344.LVIS_0524"/>
<dbReference type="GeneID" id="56992342"/>
<dbReference type="KEGG" id="lbr:LVIS_0524"/>
<dbReference type="eggNOG" id="COG1281">
    <property type="taxonomic scope" value="Bacteria"/>
</dbReference>
<dbReference type="HOGENOM" id="CLU_054493_1_0_9"/>
<dbReference type="Proteomes" id="UP000001652">
    <property type="component" value="Chromosome"/>
</dbReference>
<dbReference type="GO" id="GO:0005737">
    <property type="term" value="C:cytoplasm"/>
    <property type="evidence" value="ECO:0007669"/>
    <property type="project" value="UniProtKB-SubCell"/>
</dbReference>
<dbReference type="GO" id="GO:0044183">
    <property type="term" value="F:protein folding chaperone"/>
    <property type="evidence" value="ECO:0007669"/>
    <property type="project" value="TreeGrafter"/>
</dbReference>
<dbReference type="GO" id="GO:0051082">
    <property type="term" value="F:unfolded protein binding"/>
    <property type="evidence" value="ECO:0007669"/>
    <property type="project" value="UniProtKB-UniRule"/>
</dbReference>
<dbReference type="GO" id="GO:0042026">
    <property type="term" value="P:protein refolding"/>
    <property type="evidence" value="ECO:0007669"/>
    <property type="project" value="TreeGrafter"/>
</dbReference>
<dbReference type="CDD" id="cd00498">
    <property type="entry name" value="Hsp33"/>
    <property type="match status" value="1"/>
</dbReference>
<dbReference type="Gene3D" id="3.55.30.10">
    <property type="entry name" value="Hsp33 domain"/>
    <property type="match status" value="1"/>
</dbReference>
<dbReference type="Gene3D" id="3.90.1280.10">
    <property type="entry name" value="HSP33 redox switch-like"/>
    <property type="match status" value="1"/>
</dbReference>
<dbReference type="HAMAP" id="MF_00117">
    <property type="entry name" value="HslO"/>
    <property type="match status" value="1"/>
</dbReference>
<dbReference type="InterPro" id="IPR000397">
    <property type="entry name" value="Heat_shock_Hsp33"/>
</dbReference>
<dbReference type="InterPro" id="IPR016154">
    <property type="entry name" value="Heat_shock_Hsp33_C"/>
</dbReference>
<dbReference type="InterPro" id="IPR016153">
    <property type="entry name" value="Heat_shock_Hsp33_N"/>
</dbReference>
<dbReference type="NCBIfam" id="NF001033">
    <property type="entry name" value="PRK00114.1"/>
    <property type="match status" value="1"/>
</dbReference>
<dbReference type="PANTHER" id="PTHR30111">
    <property type="entry name" value="33 KDA CHAPERONIN"/>
    <property type="match status" value="1"/>
</dbReference>
<dbReference type="PANTHER" id="PTHR30111:SF1">
    <property type="entry name" value="33 KDA CHAPERONIN"/>
    <property type="match status" value="1"/>
</dbReference>
<dbReference type="Pfam" id="PF01430">
    <property type="entry name" value="HSP33"/>
    <property type="match status" value="1"/>
</dbReference>
<dbReference type="PIRSF" id="PIRSF005261">
    <property type="entry name" value="Heat_shock_Hsp33"/>
    <property type="match status" value="1"/>
</dbReference>
<dbReference type="SUPFAM" id="SSF64397">
    <property type="entry name" value="Hsp33 domain"/>
    <property type="match status" value="1"/>
</dbReference>
<dbReference type="SUPFAM" id="SSF118352">
    <property type="entry name" value="HSP33 redox switch-like"/>
    <property type="match status" value="1"/>
</dbReference>
<keyword id="KW-0143">Chaperone</keyword>
<keyword id="KW-0963">Cytoplasm</keyword>
<keyword id="KW-1015">Disulfide bond</keyword>
<keyword id="KW-0676">Redox-active center</keyword>
<keyword id="KW-1185">Reference proteome</keyword>
<keyword id="KW-0862">Zinc</keyword>
<organism>
    <name type="scientific">Levilactobacillus brevis (strain ATCC 367 / BCRC 12310 / CIP 105137 / JCM 1170 / LMG 11437 / NCIMB 947 / NCTC 947)</name>
    <name type="common">Lactobacillus brevis</name>
    <dbReference type="NCBI Taxonomy" id="387344"/>
    <lineage>
        <taxon>Bacteria</taxon>
        <taxon>Bacillati</taxon>
        <taxon>Bacillota</taxon>
        <taxon>Bacilli</taxon>
        <taxon>Lactobacillales</taxon>
        <taxon>Lactobacillaceae</taxon>
        <taxon>Levilactobacillus</taxon>
    </lineage>
</organism>
<gene>
    <name evidence="1" type="primary">hslO</name>
    <name type="ordered locus">LVIS_0524</name>
</gene>
<proteinExistence type="inferred from homology"/>
<comment type="function">
    <text evidence="1">Redox regulated molecular chaperone. Protects both thermally unfolding and oxidatively damaged proteins from irreversible aggregation. Plays an important role in the bacterial defense system toward oxidative stress.</text>
</comment>
<comment type="subcellular location">
    <subcellularLocation>
        <location evidence="1">Cytoplasm</location>
    </subcellularLocation>
</comment>
<comment type="PTM">
    <text evidence="1">Under oxidizing conditions two disulfide bonds are formed involving the reactive cysteines. Under reducing conditions zinc is bound to the reactive cysteines and the protein is inactive.</text>
</comment>
<comment type="similarity">
    <text evidence="1">Belongs to the HSP33 family.</text>
</comment>
<evidence type="ECO:0000255" key="1">
    <source>
        <dbReference type="HAMAP-Rule" id="MF_00117"/>
    </source>
</evidence>